<dbReference type="EC" id="3.1.1.4" evidence="6"/>
<dbReference type="EMBL" id="KX924472">
    <property type="protein sequence ID" value="API81335.1"/>
    <property type="molecule type" value="mRNA"/>
</dbReference>
<dbReference type="SMR" id="A0A1L4BJ46"/>
<dbReference type="GO" id="GO:0005576">
    <property type="term" value="C:extracellular region"/>
    <property type="evidence" value="ECO:0007669"/>
    <property type="project" value="UniProtKB-SubCell"/>
</dbReference>
<dbReference type="GO" id="GO:0046872">
    <property type="term" value="F:metal ion binding"/>
    <property type="evidence" value="ECO:0007669"/>
    <property type="project" value="UniProtKB-KW"/>
</dbReference>
<dbReference type="GO" id="GO:0004623">
    <property type="term" value="F:phospholipase A2 activity"/>
    <property type="evidence" value="ECO:0007669"/>
    <property type="project" value="UniProtKB-EC"/>
</dbReference>
<dbReference type="GO" id="GO:0050482">
    <property type="term" value="P:arachidonate secretion"/>
    <property type="evidence" value="ECO:0007669"/>
    <property type="project" value="InterPro"/>
</dbReference>
<dbReference type="GO" id="GO:0016042">
    <property type="term" value="P:lipid catabolic process"/>
    <property type="evidence" value="ECO:0007669"/>
    <property type="project" value="UniProtKB-KW"/>
</dbReference>
<dbReference type="GO" id="GO:0006644">
    <property type="term" value="P:phospholipid metabolic process"/>
    <property type="evidence" value="ECO:0007669"/>
    <property type="project" value="InterPro"/>
</dbReference>
<dbReference type="Gene3D" id="1.20.90.10">
    <property type="entry name" value="Phospholipase A2 domain"/>
    <property type="match status" value="1"/>
</dbReference>
<dbReference type="InterPro" id="IPR016090">
    <property type="entry name" value="PLipase_A2_dom"/>
</dbReference>
<dbReference type="InterPro" id="IPR036444">
    <property type="entry name" value="PLipase_A2_dom_sf"/>
</dbReference>
<dbReference type="InterPro" id="IPR033113">
    <property type="entry name" value="PLipase_A2_His_AS"/>
</dbReference>
<dbReference type="PANTHER" id="PTHR12253">
    <property type="entry name" value="RH14732P"/>
    <property type="match status" value="1"/>
</dbReference>
<dbReference type="Pfam" id="PF05826">
    <property type="entry name" value="Phospholip_A2_2"/>
    <property type="match status" value="1"/>
</dbReference>
<dbReference type="SUPFAM" id="SSF48619">
    <property type="entry name" value="Phospholipase A2, PLA2"/>
    <property type="match status" value="1"/>
</dbReference>
<dbReference type="PROSITE" id="PS00118">
    <property type="entry name" value="PA2_HIS"/>
    <property type="match status" value="1"/>
</dbReference>
<comment type="function">
    <text evidence="6">Scorpion venom phospholipase A2 (PLA2) that shows high hydrolytic activities towards lecithin and acts as an effective blocker of all angiogenesis key steps in vivo and in vitro (PubMed:26335363). It has no effect on apoptosis and does not display hemolytic, inflammatory or neurotoxic effects (PubMed:26335363). PLA2 catalyzes the calcium-dependent hydrolysis of the 2-acyl groups in 3-sn-phosphoglycerides.</text>
</comment>
<comment type="catalytic activity">
    <reaction evidence="6">
        <text>a 1,2-diacyl-sn-glycero-3-phosphocholine + H2O = a 1-acyl-sn-glycero-3-phosphocholine + a fatty acid + H(+)</text>
        <dbReference type="Rhea" id="RHEA:15801"/>
        <dbReference type="ChEBI" id="CHEBI:15377"/>
        <dbReference type="ChEBI" id="CHEBI:15378"/>
        <dbReference type="ChEBI" id="CHEBI:28868"/>
        <dbReference type="ChEBI" id="CHEBI:57643"/>
        <dbReference type="ChEBI" id="CHEBI:58168"/>
        <dbReference type="EC" id="3.1.1.4"/>
    </reaction>
</comment>
<comment type="cofactor">
    <cofactor evidence="6">
        <name>Ca(2+)</name>
        <dbReference type="ChEBI" id="CHEBI:29108"/>
    </cofactor>
    <text evidence="6">Binds 1 Ca(2+) ion.</text>
</comment>
<comment type="subunit">
    <text evidence="6">Heterodimer composed of a small subunit and a large subunit; disulfid-linked.</text>
</comment>
<comment type="subcellular location">
    <subcellularLocation>
        <location evidence="6">Secreted</location>
    </subcellularLocation>
</comment>
<comment type="tissue specificity">
    <text evidence="9">Expressed by the venom gland.</text>
</comment>
<comment type="mass spectrometry" mass="13293.65" method="MALDI" evidence="6">
    <molecule>Phospholipase A2 large subunit</molecule>
</comment>
<comment type="mass spectrometry" mass="2008.05" method="MALDI" evidence="6">
    <molecule>Phospholipase A2 small subunit</molecule>
</comment>
<comment type="similarity">
    <text evidence="8">Belongs to the phospholipase A2 family. Group III subfamily.</text>
</comment>
<keyword id="KW-0106">Calcium</keyword>
<keyword id="KW-0165">Cleavage on pair of basic residues</keyword>
<keyword id="KW-0903">Direct protein sequencing</keyword>
<keyword id="KW-1015">Disulfide bond</keyword>
<keyword id="KW-0325">Glycoprotein</keyword>
<keyword id="KW-0378">Hydrolase</keyword>
<keyword id="KW-0442">Lipid degradation</keyword>
<keyword id="KW-0443">Lipid metabolism</keyword>
<keyword id="KW-0479">Metal-binding</keyword>
<keyword id="KW-0964">Secreted</keyword>
<keyword id="KW-0732">Signal</keyword>
<keyword id="KW-0865">Zymogen</keyword>
<reference key="1">
    <citation type="journal article" date="2016" name="Toxicon">
        <title>The first report on transcriptome analysis of the venom gland of Iranian scorpion, Hemiscorpius lepturus.</title>
        <authorList>
            <person name="Kazemi-Lomedasht F."/>
            <person name="Khalaj V."/>
            <person name="Bagheri K.P."/>
            <person name="Behdani M."/>
            <person name="Shahbazzadeh D."/>
        </authorList>
    </citation>
    <scope>NUCLEOTIDE SEQUENCE [MRNA]</scope>
    <source>
        <tissue>Venom gland</tissue>
    </source>
</reference>
<reference key="2">
    <citation type="journal article" date="2015" name="Toxicon">
        <title>Hemilipin, a novel Hemiscorpius lepturus venom heterodimeric phospholipase A2, which inhibits angiogenesis in vitro and in vivo.</title>
        <authorList>
            <person name="Jridi I."/>
            <person name="Catacchio I."/>
            <person name="Majdoub H."/>
            <person name="Shahbazeddah D."/>
            <person name="El Ayeb M."/>
            <person name="Frassanito M.A."/>
            <person name="Ribatti D."/>
            <person name="Vacca A."/>
            <person name="Borchani L."/>
        </authorList>
    </citation>
    <scope>PROTEIN SEQUENCE OF 106-129 AND 218-227</scope>
    <scope>FUNCTION</scope>
    <scope>SUBCELLULAR LOCATION</scope>
    <scope>MASS SPECTROMETRY</scope>
    <scope>SUBUNIT</scope>
    <scope>CATALYTIC ACTIVITY</scope>
    <scope>COFACTOR</scope>
    <source>
        <tissue>Venom</tissue>
    </source>
</reference>
<protein>
    <recommendedName>
        <fullName evidence="7">Phospholipase A2 hemilipin</fullName>
        <ecNumber evidence="6">3.1.1.4</ecNumber>
    </recommendedName>
    <alternativeName>
        <fullName>Phosphatidylcholine 2-acylhydrolase</fullName>
    </alternativeName>
    <alternativeName>
        <fullName evidence="5">Phospholipase A(2)</fullName>
    </alternativeName>
    <component>
        <recommendedName>
            <fullName evidence="7">Phospholipase A2 large subunit</fullName>
        </recommendedName>
    </component>
    <component>
        <recommendedName>
            <fullName evidence="7">Phospholipase A2 small subunit</fullName>
        </recommendedName>
    </component>
</protein>
<sequence length="232" mass="26339">MTFLILTILATVTPSLYSHVVQRELRVNFEPLAGQRDSWPVARAAMVTFDARSEKAREFSECRMINSMHELSRELMDSPEHTVKRASKEEMDDLVQRCSGSAEGRSWFIWPDTKWCGPGTDAKNESDLGPLEADKCCRTHDHCDYIGAGETKYGLTNKSFFTKLNCKCEAAFDQCLKESIDRAEGSAKSSMEGLHSFYFNTYSPECYEVKCSRKRDAECTNGIAIWKDSYKS</sequence>
<organism>
    <name type="scientific">Hemiscorpius lepturus</name>
    <name type="common">Scorpion</name>
    <dbReference type="NCBI Taxonomy" id="520031"/>
    <lineage>
        <taxon>Eukaryota</taxon>
        <taxon>Metazoa</taxon>
        <taxon>Ecdysozoa</taxon>
        <taxon>Arthropoda</taxon>
        <taxon>Chelicerata</taxon>
        <taxon>Arachnida</taxon>
        <taxon>Scorpiones</taxon>
        <taxon>Iurida</taxon>
        <taxon>Scorpionoidea</taxon>
        <taxon>Hemiscorpiidae</taxon>
    </lineage>
</organism>
<feature type="signal peptide" evidence="3">
    <location>
        <begin position="1"/>
        <end position="18"/>
    </location>
</feature>
<feature type="propeptide" id="PRO_0000447333" evidence="8">
    <location>
        <begin position="19"/>
        <end position="105"/>
    </location>
</feature>
<feature type="chain" id="PRO_5012227965" description="Phospholipase A2 large subunit" evidence="9">
    <location>
        <begin position="106"/>
        <end position="213"/>
    </location>
</feature>
<feature type="propeptide" id="PRO_0000447334" evidence="8">
    <location>
        <begin position="214"/>
        <end position="217"/>
    </location>
</feature>
<feature type="peptide" id="PRO_0000447335" description="Phospholipase A2 small subunit" evidence="9">
    <location>
        <begin position="218"/>
        <end position="232"/>
    </location>
</feature>
<feature type="active site" evidence="5">
    <location>
        <position position="140"/>
    </location>
</feature>
<feature type="binding site" evidence="1">
    <location>
        <position position="115"/>
    </location>
    <ligand>
        <name>Ca(2+)</name>
        <dbReference type="ChEBI" id="CHEBI:29108"/>
    </ligand>
</feature>
<feature type="binding site" evidence="1">
    <location>
        <position position="117"/>
    </location>
    <ligand>
        <name>Ca(2+)</name>
        <dbReference type="ChEBI" id="CHEBI:29108"/>
    </ligand>
</feature>
<feature type="binding site" evidence="1">
    <location>
        <position position="119"/>
    </location>
    <ligand>
        <name>Ca(2+)</name>
        <dbReference type="ChEBI" id="CHEBI:29108"/>
    </ligand>
</feature>
<feature type="binding site" evidence="1">
    <location>
        <position position="141"/>
    </location>
    <ligand>
        <name>Ca(2+)</name>
        <dbReference type="ChEBI" id="CHEBI:29108"/>
    </ligand>
</feature>
<feature type="glycosylation site" description="N-linked (GlcNAc...) asparagine" evidence="4">
    <location>
        <position position="124"/>
    </location>
</feature>
<feature type="glycosylation site" description="N-linked (GlcNAc...) asparagine" evidence="4">
    <location>
        <position position="157"/>
    </location>
</feature>
<feature type="disulfide bond" evidence="2">
    <location>
        <begin position="116"/>
        <end position="137"/>
    </location>
</feature>
<feature type="disulfide bond" evidence="2">
    <location>
        <begin position="136"/>
        <end position="175"/>
    </location>
</feature>
<feature type="disulfide bond" evidence="2">
    <location>
        <begin position="143"/>
        <end position="168"/>
    </location>
</feature>
<feature type="disulfide bond" evidence="2">
    <location>
        <begin position="166"/>
        <end position="206"/>
    </location>
</feature>
<feature type="disulfide bond" description="Interchain (between large and small chains)" evidence="2">
    <location>
        <begin position="211"/>
        <end position="219"/>
    </location>
</feature>
<feature type="sequence conflict" description="In Ref. 2; AA sequence." evidence="8" ref="2">
    <original>P</original>
    <variation>V</variation>
    <location>
        <position position="118"/>
    </location>
</feature>
<feature type="sequence conflict" description="In Ref. 2; AA sequence." evidence="8" ref="2">
    <original>KN</original>
    <variation>AS</variation>
    <location>
        <begin position="123"/>
        <end position="124"/>
    </location>
</feature>
<proteinExistence type="evidence at protein level"/>
<evidence type="ECO:0000250" key="1">
    <source>
        <dbReference type="UniProtKB" id="P00630"/>
    </source>
</evidence>
<evidence type="ECO:0000250" key="2">
    <source>
        <dbReference type="UniProtKB" id="Q6T178"/>
    </source>
</evidence>
<evidence type="ECO:0000255" key="3"/>
<evidence type="ECO:0000255" key="4">
    <source>
        <dbReference type="PROSITE-ProRule" id="PRU00498"/>
    </source>
</evidence>
<evidence type="ECO:0000255" key="5">
    <source>
        <dbReference type="PROSITE-ProRule" id="PRU10035"/>
    </source>
</evidence>
<evidence type="ECO:0000269" key="6">
    <source>
    </source>
</evidence>
<evidence type="ECO:0000303" key="7">
    <source>
    </source>
</evidence>
<evidence type="ECO:0000305" key="8"/>
<evidence type="ECO:0000305" key="9">
    <source>
    </source>
</evidence>
<accession>A0A1L4BJ46</accession>
<name>HEMI1_HEMLE</name>